<name>YTFE_SALSV</name>
<comment type="function">
    <text evidence="1">Di-iron-containing protein involved in the repair of iron-sulfur clusters damaged by oxidative and nitrosative stress conditions.</text>
</comment>
<comment type="subunit">
    <text evidence="1">Homodimer.</text>
</comment>
<comment type="subcellular location">
    <subcellularLocation>
        <location evidence="1">Cytoplasm</location>
    </subcellularLocation>
</comment>
<comment type="similarity">
    <text evidence="1">Belongs to the RIC family. YtfE subfamily.</text>
</comment>
<sequence length="220" mass="24937">MAYRDQPLGELALSIPRASALFRQYDMDYCCGGKQTLARAAARHDVDIDIIEAQLAQLAEQPIEKDWRAVPLADIIDHIVVRYHDRHREQLPELILQATKVERVHADKPNVPRGLTKYLTALHEELSSHMMKEEQILFPMIKQGMGRQATGPISVMEIEHDEAGELVDVIKHVTQNVTPPPEACTTWKAMYNGINEMIDDLMEHISLENNVLFPRALAGE</sequence>
<keyword id="KW-0963">Cytoplasm</keyword>
<keyword id="KW-0408">Iron</keyword>
<keyword id="KW-0479">Metal-binding</keyword>
<keyword id="KW-0346">Stress response</keyword>
<accession>B4TT41</accession>
<reference key="1">
    <citation type="journal article" date="2011" name="J. Bacteriol.">
        <title>Comparative genomics of 28 Salmonella enterica isolates: evidence for CRISPR-mediated adaptive sublineage evolution.</title>
        <authorList>
            <person name="Fricke W.F."/>
            <person name="Mammel M.K."/>
            <person name="McDermott P.F."/>
            <person name="Tartera C."/>
            <person name="White D.G."/>
            <person name="Leclerc J.E."/>
            <person name="Ravel J."/>
            <person name="Cebula T.A."/>
        </authorList>
    </citation>
    <scope>NUCLEOTIDE SEQUENCE [LARGE SCALE GENOMIC DNA]</scope>
    <source>
        <strain>CVM19633</strain>
    </source>
</reference>
<proteinExistence type="inferred from homology"/>
<organism>
    <name type="scientific">Salmonella schwarzengrund (strain CVM19633)</name>
    <dbReference type="NCBI Taxonomy" id="439843"/>
    <lineage>
        <taxon>Bacteria</taxon>
        <taxon>Pseudomonadati</taxon>
        <taxon>Pseudomonadota</taxon>
        <taxon>Gammaproteobacteria</taxon>
        <taxon>Enterobacterales</taxon>
        <taxon>Enterobacteriaceae</taxon>
        <taxon>Salmonella</taxon>
    </lineage>
</organism>
<gene>
    <name evidence="1" type="primary">ytfE</name>
    <name type="ordered locus">SeSA_A4667</name>
</gene>
<evidence type="ECO:0000255" key="1">
    <source>
        <dbReference type="HAMAP-Rule" id="MF_01606"/>
    </source>
</evidence>
<protein>
    <recommendedName>
        <fullName evidence="1">Iron-sulfur cluster repair protein YtfE</fullName>
    </recommendedName>
</protein>
<dbReference type="EMBL" id="CP001127">
    <property type="protein sequence ID" value="ACF89866.1"/>
    <property type="molecule type" value="Genomic_DNA"/>
</dbReference>
<dbReference type="RefSeq" id="WP_000331467.1">
    <property type="nucleotide sequence ID" value="NC_011094.1"/>
</dbReference>
<dbReference type="SMR" id="B4TT41"/>
<dbReference type="KEGG" id="sew:SeSA_A4667"/>
<dbReference type="HOGENOM" id="CLU_076075_2_0_6"/>
<dbReference type="Proteomes" id="UP000001865">
    <property type="component" value="Chromosome"/>
</dbReference>
<dbReference type="GO" id="GO:0005737">
    <property type="term" value="C:cytoplasm"/>
    <property type="evidence" value="ECO:0007669"/>
    <property type="project" value="UniProtKB-SubCell"/>
</dbReference>
<dbReference type="GO" id="GO:0046872">
    <property type="term" value="F:metal ion binding"/>
    <property type="evidence" value="ECO:0007669"/>
    <property type="project" value="UniProtKB-KW"/>
</dbReference>
<dbReference type="GO" id="GO:0030091">
    <property type="term" value="P:protein repair"/>
    <property type="evidence" value="ECO:0007669"/>
    <property type="project" value="UniProtKB-UniRule"/>
</dbReference>
<dbReference type="GO" id="GO:0051409">
    <property type="term" value="P:response to nitrosative stress"/>
    <property type="evidence" value="ECO:0007669"/>
    <property type="project" value="UniProtKB-UniRule"/>
</dbReference>
<dbReference type="GO" id="GO:0006979">
    <property type="term" value="P:response to oxidative stress"/>
    <property type="evidence" value="ECO:0007669"/>
    <property type="project" value="UniProtKB-UniRule"/>
</dbReference>
<dbReference type="Gene3D" id="1.20.120.520">
    <property type="entry name" value="nmb1532 protein domain like"/>
    <property type="match status" value="1"/>
</dbReference>
<dbReference type="HAMAP" id="MF_01606">
    <property type="entry name" value="RIC_YtfE"/>
    <property type="match status" value="1"/>
</dbReference>
<dbReference type="InterPro" id="IPR023742">
    <property type="entry name" value="FeS-repair_YftE"/>
</dbReference>
<dbReference type="InterPro" id="IPR012312">
    <property type="entry name" value="Hemerythrin-like"/>
</dbReference>
<dbReference type="InterPro" id="IPR019903">
    <property type="entry name" value="RIC_family"/>
</dbReference>
<dbReference type="NCBIfam" id="TIGR03652">
    <property type="entry name" value="FeS_repair_RIC"/>
    <property type="match status" value="1"/>
</dbReference>
<dbReference type="NCBIfam" id="NF008221">
    <property type="entry name" value="PRK10992.1"/>
    <property type="match status" value="1"/>
</dbReference>
<dbReference type="PANTHER" id="PTHR36438">
    <property type="entry name" value="IRON-SULFUR CLUSTER REPAIR PROTEIN YTFE"/>
    <property type="match status" value="1"/>
</dbReference>
<dbReference type="PANTHER" id="PTHR36438:SF1">
    <property type="entry name" value="IRON-SULFUR CLUSTER REPAIR PROTEIN YTFE"/>
    <property type="match status" value="1"/>
</dbReference>
<dbReference type="Pfam" id="PF01814">
    <property type="entry name" value="Hemerythrin"/>
    <property type="match status" value="1"/>
</dbReference>
<dbReference type="Pfam" id="PF04405">
    <property type="entry name" value="ScdA_N"/>
    <property type="match status" value="1"/>
</dbReference>
<feature type="chain" id="PRO_1000148189" description="Iron-sulfur cluster repair protein YtfE">
    <location>
        <begin position="1"/>
        <end position="220"/>
    </location>
</feature>